<organism>
    <name type="scientific">Streptococcus thermophilus (strain ATCC BAA-250 / LMG 18311)</name>
    <dbReference type="NCBI Taxonomy" id="264199"/>
    <lineage>
        <taxon>Bacteria</taxon>
        <taxon>Bacillati</taxon>
        <taxon>Bacillota</taxon>
        <taxon>Bacilli</taxon>
        <taxon>Lactobacillales</taxon>
        <taxon>Streptococcaceae</taxon>
        <taxon>Streptococcus</taxon>
    </lineage>
</organism>
<dbReference type="EC" id="3.5.1.5" evidence="1"/>
<dbReference type="EMBL" id="CP000023">
    <property type="protein sequence ID" value="AAV60005.1"/>
    <property type="molecule type" value="Genomic_DNA"/>
</dbReference>
<dbReference type="RefSeq" id="WP_002949548.1">
    <property type="nucleotide sequence ID" value="NC_006448.1"/>
</dbReference>
<dbReference type="SMR" id="Q5M607"/>
<dbReference type="STRING" id="264199.stu0283"/>
<dbReference type="MEROPS" id="M38.982"/>
<dbReference type="GeneID" id="66898208"/>
<dbReference type="KEGG" id="stl:stu0283"/>
<dbReference type="eggNOG" id="COG0804">
    <property type="taxonomic scope" value="Bacteria"/>
</dbReference>
<dbReference type="HOGENOM" id="CLU_000980_0_0_9"/>
<dbReference type="UniPathway" id="UPA00258">
    <property type="reaction ID" value="UER00370"/>
</dbReference>
<dbReference type="Proteomes" id="UP000001170">
    <property type="component" value="Chromosome"/>
</dbReference>
<dbReference type="GO" id="GO:0005737">
    <property type="term" value="C:cytoplasm"/>
    <property type="evidence" value="ECO:0007669"/>
    <property type="project" value="UniProtKB-SubCell"/>
</dbReference>
<dbReference type="GO" id="GO:0016151">
    <property type="term" value="F:nickel cation binding"/>
    <property type="evidence" value="ECO:0007669"/>
    <property type="project" value="UniProtKB-UniRule"/>
</dbReference>
<dbReference type="GO" id="GO:0009039">
    <property type="term" value="F:urease activity"/>
    <property type="evidence" value="ECO:0007669"/>
    <property type="project" value="UniProtKB-UniRule"/>
</dbReference>
<dbReference type="GO" id="GO:0043419">
    <property type="term" value="P:urea catabolic process"/>
    <property type="evidence" value="ECO:0007669"/>
    <property type="project" value="UniProtKB-UniRule"/>
</dbReference>
<dbReference type="CDD" id="cd00375">
    <property type="entry name" value="Urease_alpha"/>
    <property type="match status" value="1"/>
</dbReference>
<dbReference type="Gene3D" id="3.20.20.140">
    <property type="entry name" value="Metal-dependent hydrolases"/>
    <property type="match status" value="1"/>
</dbReference>
<dbReference type="Gene3D" id="2.30.40.10">
    <property type="entry name" value="Urease, subunit C, domain 1"/>
    <property type="match status" value="1"/>
</dbReference>
<dbReference type="HAMAP" id="MF_01953">
    <property type="entry name" value="Urease_alpha"/>
    <property type="match status" value="1"/>
</dbReference>
<dbReference type="InterPro" id="IPR006680">
    <property type="entry name" value="Amidohydro-rel"/>
</dbReference>
<dbReference type="InterPro" id="IPR011059">
    <property type="entry name" value="Metal-dep_hydrolase_composite"/>
</dbReference>
<dbReference type="InterPro" id="IPR032466">
    <property type="entry name" value="Metal_Hydrolase"/>
</dbReference>
<dbReference type="InterPro" id="IPR011612">
    <property type="entry name" value="Urease_alpha_N_dom"/>
</dbReference>
<dbReference type="InterPro" id="IPR050112">
    <property type="entry name" value="Urease_alpha_subunit"/>
</dbReference>
<dbReference type="InterPro" id="IPR017950">
    <property type="entry name" value="Urease_AS"/>
</dbReference>
<dbReference type="InterPro" id="IPR005848">
    <property type="entry name" value="Urease_asu"/>
</dbReference>
<dbReference type="InterPro" id="IPR017951">
    <property type="entry name" value="Urease_asu_c"/>
</dbReference>
<dbReference type="InterPro" id="IPR029754">
    <property type="entry name" value="Urease_Ni-bd"/>
</dbReference>
<dbReference type="NCBIfam" id="NF009686">
    <property type="entry name" value="PRK13207.1"/>
    <property type="match status" value="1"/>
</dbReference>
<dbReference type="NCBIfam" id="TIGR01792">
    <property type="entry name" value="urease_alph"/>
    <property type="match status" value="1"/>
</dbReference>
<dbReference type="PANTHER" id="PTHR43440">
    <property type="entry name" value="UREASE"/>
    <property type="match status" value="1"/>
</dbReference>
<dbReference type="PANTHER" id="PTHR43440:SF1">
    <property type="entry name" value="UREASE"/>
    <property type="match status" value="1"/>
</dbReference>
<dbReference type="Pfam" id="PF01979">
    <property type="entry name" value="Amidohydro_1"/>
    <property type="match status" value="1"/>
</dbReference>
<dbReference type="Pfam" id="PF00449">
    <property type="entry name" value="Urease_alpha"/>
    <property type="match status" value="1"/>
</dbReference>
<dbReference type="PRINTS" id="PR01752">
    <property type="entry name" value="UREASE"/>
</dbReference>
<dbReference type="SUPFAM" id="SSF51338">
    <property type="entry name" value="Composite domain of metallo-dependent hydrolases"/>
    <property type="match status" value="1"/>
</dbReference>
<dbReference type="SUPFAM" id="SSF51556">
    <property type="entry name" value="Metallo-dependent hydrolases"/>
    <property type="match status" value="1"/>
</dbReference>
<dbReference type="PROSITE" id="PS01120">
    <property type="entry name" value="UREASE_1"/>
    <property type="match status" value="1"/>
</dbReference>
<dbReference type="PROSITE" id="PS00145">
    <property type="entry name" value="UREASE_2"/>
    <property type="match status" value="1"/>
</dbReference>
<dbReference type="PROSITE" id="PS51368">
    <property type="entry name" value="UREASE_3"/>
    <property type="match status" value="1"/>
</dbReference>
<reference key="1">
    <citation type="journal article" date="2004" name="Nat. Biotechnol.">
        <title>Complete sequence and comparative genome analysis of the dairy bacterium Streptococcus thermophilus.</title>
        <authorList>
            <person name="Bolotin A."/>
            <person name="Quinquis B."/>
            <person name="Renault P."/>
            <person name="Sorokin A."/>
            <person name="Ehrlich S.D."/>
            <person name="Kulakauskas S."/>
            <person name="Lapidus A."/>
            <person name="Goltsman E."/>
            <person name="Mazur M."/>
            <person name="Pusch G.D."/>
            <person name="Fonstein M."/>
            <person name="Overbeek R."/>
            <person name="Kyprides N."/>
            <person name="Purnelle B."/>
            <person name="Prozzi D."/>
            <person name="Ngui K."/>
            <person name="Masuy D."/>
            <person name="Hancy F."/>
            <person name="Burteau S."/>
            <person name="Boutry M."/>
            <person name="Delcour J."/>
            <person name="Goffeau A."/>
            <person name="Hols P."/>
        </authorList>
    </citation>
    <scope>NUCLEOTIDE SEQUENCE [LARGE SCALE GENOMIC DNA]</scope>
    <source>
        <strain>ATCC BAA-250 / LMG 18311</strain>
    </source>
</reference>
<gene>
    <name evidence="1" type="primary">ureC</name>
    <name type="ordered locus">stu0283</name>
</gene>
<name>URE1_STRT2</name>
<comment type="catalytic activity">
    <reaction evidence="1">
        <text>urea + 2 H2O + H(+) = hydrogencarbonate + 2 NH4(+)</text>
        <dbReference type="Rhea" id="RHEA:20557"/>
        <dbReference type="ChEBI" id="CHEBI:15377"/>
        <dbReference type="ChEBI" id="CHEBI:15378"/>
        <dbReference type="ChEBI" id="CHEBI:16199"/>
        <dbReference type="ChEBI" id="CHEBI:17544"/>
        <dbReference type="ChEBI" id="CHEBI:28938"/>
        <dbReference type="EC" id="3.5.1.5"/>
    </reaction>
</comment>
<comment type="cofactor">
    <cofactor evidence="1">
        <name>Ni cation</name>
        <dbReference type="ChEBI" id="CHEBI:25516"/>
    </cofactor>
    <text evidence="1">Binds 2 nickel ions per subunit.</text>
</comment>
<comment type="pathway">
    <text evidence="1">Nitrogen metabolism; urea degradation; CO(2) and NH(3) from urea (urease route): step 1/1.</text>
</comment>
<comment type="subunit">
    <text evidence="1">Heterotrimer of UreA (gamma), UreB (beta) and UreC (alpha) subunits. Three heterotrimers associate to form the active enzyme.</text>
</comment>
<comment type="subcellular location">
    <subcellularLocation>
        <location evidence="1">Cytoplasm</location>
    </subcellularLocation>
</comment>
<comment type="PTM">
    <text evidence="1">Carboxylation allows a single lysine to coordinate two nickel ions.</text>
</comment>
<comment type="similarity">
    <text evidence="1">Belongs to the metallo-dependent hydrolases superfamily. Urease alpha subunit family.</text>
</comment>
<evidence type="ECO:0000255" key="1">
    <source>
        <dbReference type="HAMAP-Rule" id="MF_01953"/>
    </source>
</evidence>
<protein>
    <recommendedName>
        <fullName evidence="1">Urease subunit alpha</fullName>
        <ecNumber evidence="1">3.5.1.5</ecNumber>
    </recommendedName>
    <alternativeName>
        <fullName evidence="1">Urea amidohydrolase subunit alpha</fullName>
    </alternativeName>
</protein>
<accession>Q5M607</accession>
<feature type="chain" id="PRO_0000234183" description="Urease subunit alpha">
    <location>
        <begin position="1"/>
        <end position="572"/>
    </location>
</feature>
<feature type="domain" description="Urease" evidence="1">
    <location>
        <begin position="133"/>
        <end position="572"/>
    </location>
</feature>
<feature type="active site" description="Proton donor" evidence="1">
    <location>
        <position position="324"/>
    </location>
</feature>
<feature type="binding site" evidence="1">
    <location>
        <position position="138"/>
    </location>
    <ligand>
        <name>Ni(2+)</name>
        <dbReference type="ChEBI" id="CHEBI:49786"/>
        <label>1</label>
    </ligand>
</feature>
<feature type="binding site" evidence="1">
    <location>
        <position position="140"/>
    </location>
    <ligand>
        <name>Ni(2+)</name>
        <dbReference type="ChEBI" id="CHEBI:49786"/>
        <label>1</label>
    </ligand>
</feature>
<feature type="binding site" description="via carbamate group" evidence="1">
    <location>
        <position position="221"/>
    </location>
    <ligand>
        <name>Ni(2+)</name>
        <dbReference type="ChEBI" id="CHEBI:49786"/>
        <label>1</label>
    </ligand>
</feature>
<feature type="binding site" description="via carbamate group" evidence="1">
    <location>
        <position position="221"/>
    </location>
    <ligand>
        <name>Ni(2+)</name>
        <dbReference type="ChEBI" id="CHEBI:49786"/>
        <label>2</label>
    </ligand>
</feature>
<feature type="binding site" evidence="1">
    <location>
        <position position="223"/>
    </location>
    <ligand>
        <name>substrate</name>
    </ligand>
</feature>
<feature type="binding site" evidence="1">
    <location>
        <position position="250"/>
    </location>
    <ligand>
        <name>Ni(2+)</name>
        <dbReference type="ChEBI" id="CHEBI:49786"/>
        <label>2</label>
    </ligand>
</feature>
<feature type="binding site" evidence="1">
    <location>
        <position position="276"/>
    </location>
    <ligand>
        <name>Ni(2+)</name>
        <dbReference type="ChEBI" id="CHEBI:49786"/>
        <label>2</label>
    </ligand>
</feature>
<feature type="binding site" evidence="1">
    <location>
        <position position="364"/>
    </location>
    <ligand>
        <name>Ni(2+)</name>
        <dbReference type="ChEBI" id="CHEBI:49786"/>
        <label>1</label>
    </ligand>
</feature>
<feature type="modified residue" description="N6-carboxylysine" evidence="1">
    <location>
        <position position="221"/>
    </location>
</feature>
<keyword id="KW-0963">Cytoplasm</keyword>
<keyword id="KW-0378">Hydrolase</keyword>
<keyword id="KW-0479">Metal-binding</keyword>
<keyword id="KW-0533">Nickel</keyword>
<keyword id="KW-1185">Reference proteome</keyword>
<proteinExistence type="inferred from homology"/>
<sequence length="572" mass="61857">MSFKMDREEYAQHYGPTVGDSVRLGDTNLFAAIEKDFTVYGQESKFGGGKVLRDGMGVSATETRDNPSVVDTIITGATIIDYTGIIKADIGIRDGKIVAIGRGGNPDTMDNVDFVVGASTEAIAAEGLIVTAGGIDLHVHYISADLPEFGMDNGITTLFGGGTGPADGSNATTCTPGKFHITRMLQAVDDMPANFGFLAKGVGSETEVVEEQIKAGAAGIKTHEDWGATYAGIDNSLKVADKYDVSFAVHTDSLNEGGFMENTLESFQGRTVHTFHTEGSGGGHAPDIMVFAGKENILPSSTNPTNPYTTNAIGELLDMVMVCHHLDPKIPEDVSFAESRVRKQTVAAEDVLHDMGALSIMTSDAMAMGRVGEVVMRCWQLADKMKAQRGPLEGDSEFNDNNRIKRYVAKYTINPAITNGIADYIGSVEVGKFADLVIWEPAQFGAKPKLVLKGGMLTYGVMGDAGSSLPTPQPRIMRKLYGAYGQAVHKTNITFVSQYAYDHGIKEEIGLNKIVLPVKNTRNLTKRDMKLNDYAPKTIRIDPQTFDVFIDDELVTCEPIHTTSLSQRYFLF</sequence>